<name>ANIA_NEIMA</name>
<protein>
    <recommendedName>
        <fullName>Copper-containing nitrite reductase</fullName>
        <ecNumber>1.7.2.1</ecNumber>
    </recommendedName>
</protein>
<gene>
    <name type="primary">aniA</name>
    <name type="ordered locus">NMA1887</name>
</gene>
<comment type="function">
    <text evidence="1">Catalyzes the reduction of nitrite to nitric oxide (NO). It could be essential for growth and survival in oxygen-depleted environments (By similarity).</text>
</comment>
<comment type="catalytic activity">
    <reaction>
        <text>nitric oxide + Fe(III)-[cytochrome c] + H2O = Fe(II)-[cytochrome c] + nitrite + 2 H(+)</text>
        <dbReference type="Rhea" id="RHEA:15233"/>
        <dbReference type="Rhea" id="RHEA-COMP:10350"/>
        <dbReference type="Rhea" id="RHEA-COMP:14399"/>
        <dbReference type="ChEBI" id="CHEBI:15377"/>
        <dbReference type="ChEBI" id="CHEBI:15378"/>
        <dbReference type="ChEBI" id="CHEBI:16301"/>
        <dbReference type="ChEBI" id="CHEBI:16480"/>
        <dbReference type="ChEBI" id="CHEBI:29033"/>
        <dbReference type="ChEBI" id="CHEBI:29034"/>
        <dbReference type="EC" id="1.7.2.1"/>
    </reaction>
</comment>
<comment type="cofactor">
    <cofactor evidence="1">
        <name>Cu(+)</name>
        <dbReference type="ChEBI" id="CHEBI:49552"/>
    </cofactor>
    <text evidence="1">Binds 1 Cu(+) ion.</text>
</comment>
<comment type="cofactor">
    <cofactor evidence="1">
        <name>Cu(2+)</name>
        <dbReference type="ChEBI" id="CHEBI:29036"/>
    </cofactor>
    <text evidence="1">Binds 1 Cu(2+) ion.</text>
</comment>
<comment type="subunit">
    <text evidence="1">Homotrimer.</text>
</comment>
<comment type="subcellular location">
    <subcellularLocation>
        <location evidence="4">Cell outer membrane</location>
        <topology evidence="4">Lipid-anchor</topology>
    </subcellularLocation>
</comment>
<comment type="similarity">
    <text evidence="4">Belongs to the multicopper oxidase family.</text>
</comment>
<sequence length="386" mass="40390">MKRQALAAIIASMFALAACGGEPAAQTPAASAEAASSAAQTAAETPAGELPVIDAVTTHAPEVPPAIDRDYPAKVRVKMETVEKTMKMDDGVEYRYWTFDGDVPGRMIRVREGDTVEVEFSNNPSSTVPHNVDFHAATGQGGGAAATFTAPGRTSTFSFKALQPGLYIYHCAVAPVGMHIANGMYGLILVEPKEGLPKVDKEFYIVQGDFYTKGKKGAQGLQPFDMDKAIAEQPEYVVFNGHVGAIAGDNALKAKAGETVRMYVGNGGPNLVSSFHVIGEIFDKVYVEGGKLINENVQSTIVPAGGSAIVEFKVDIPGSYTLVDHSIFRAFNKGALGQLKVEGAENPEIMTQKLSDTAYAGNGAAPAASAPAASAPAASAPAKSDY</sequence>
<feature type="signal peptide" evidence="2">
    <location>
        <begin position="1"/>
        <end position="18"/>
    </location>
</feature>
<feature type="chain" id="PRO_0000002998" description="Copper-containing nitrite reductase">
    <location>
        <begin position="19"/>
        <end position="386"/>
    </location>
</feature>
<feature type="domain" description="Plastocyanin-like 1">
    <location>
        <begin position="97"/>
        <end position="191"/>
    </location>
</feature>
<feature type="domain" description="Plastocyanin-like 2">
    <location>
        <begin position="241"/>
        <end position="342"/>
    </location>
</feature>
<feature type="repeat" description="1">
    <location>
        <begin position="367"/>
        <end position="371"/>
    </location>
</feature>
<feature type="repeat" description="2">
    <location>
        <begin position="372"/>
        <end position="376"/>
    </location>
</feature>
<feature type="repeat" description="3">
    <location>
        <begin position="377"/>
        <end position="381"/>
    </location>
</feature>
<feature type="region of interest" description="Disordered" evidence="3">
    <location>
        <begin position="363"/>
        <end position="386"/>
    </location>
</feature>
<feature type="region of interest" description="3 X 5 AA tandem repeats of A-A-S-A-P">
    <location>
        <begin position="367"/>
        <end position="381"/>
    </location>
</feature>
<feature type="compositionally biased region" description="Low complexity" evidence="3">
    <location>
        <begin position="364"/>
        <end position="386"/>
    </location>
</feature>
<feature type="binding site" description="type 1 copper site" evidence="1">
    <location>
        <position position="130"/>
    </location>
    <ligand>
        <name>Cu cation</name>
        <dbReference type="ChEBI" id="CHEBI:23378"/>
        <label>1</label>
    </ligand>
</feature>
<feature type="binding site" description="type 2 copper site" evidence="1">
    <location>
        <position position="135"/>
    </location>
    <ligand>
        <name>Cu cation</name>
        <dbReference type="ChEBI" id="CHEBI:23378"/>
        <label>2</label>
    </ligand>
</feature>
<feature type="binding site" evidence="1">
    <location>
        <position position="135"/>
    </location>
    <ligand>
        <name>substrate</name>
    </ligand>
</feature>
<feature type="binding site" description="type 2 copper site" evidence="1">
    <location>
        <position position="170"/>
    </location>
    <ligand>
        <name>Cu cation</name>
        <dbReference type="ChEBI" id="CHEBI:23378"/>
        <label>2</label>
    </ligand>
</feature>
<feature type="binding site" description="type 1 copper site" evidence="1">
    <location>
        <position position="171"/>
    </location>
    <ligand>
        <name>Cu cation</name>
        <dbReference type="ChEBI" id="CHEBI:23378"/>
        <label>1</label>
    </ligand>
</feature>
<feature type="binding site" description="type 1 copper site" evidence="1">
    <location>
        <position position="179"/>
    </location>
    <ligand>
        <name>Cu cation</name>
        <dbReference type="ChEBI" id="CHEBI:23378"/>
        <label>1</label>
    </ligand>
</feature>
<feature type="binding site" description="type 1 copper site" evidence="1">
    <location>
        <position position="184"/>
    </location>
    <ligand>
        <name>Cu cation</name>
        <dbReference type="ChEBI" id="CHEBI:23378"/>
        <label>1</label>
    </ligand>
</feature>
<feature type="binding site" evidence="1">
    <location>
        <position position="276"/>
    </location>
    <ligand>
        <name>substrate</name>
    </ligand>
</feature>
<feature type="binding site" description="type 2 copper site" evidence="1">
    <location>
        <position position="325"/>
    </location>
    <ligand>
        <name>Cu cation</name>
        <dbReference type="ChEBI" id="CHEBI:23378"/>
        <label>2</label>
    </ligand>
</feature>
<feature type="lipid moiety-binding region" description="N-palmitoyl cysteine" evidence="4">
    <location>
        <position position="19"/>
    </location>
</feature>
<feature type="lipid moiety-binding region" description="S-diacylglycerol cysteine" evidence="4">
    <location>
        <position position="19"/>
    </location>
</feature>
<accession>Q9JTB8</accession>
<accession>A1IT94</accession>
<keyword id="KW-0998">Cell outer membrane</keyword>
<keyword id="KW-0186">Copper</keyword>
<keyword id="KW-0449">Lipoprotein</keyword>
<keyword id="KW-0472">Membrane</keyword>
<keyword id="KW-0479">Metal-binding</keyword>
<keyword id="KW-0560">Oxidoreductase</keyword>
<keyword id="KW-0564">Palmitate</keyword>
<keyword id="KW-0677">Repeat</keyword>
<keyword id="KW-0732">Signal</keyword>
<proteinExistence type="inferred from homology"/>
<dbReference type="EC" id="1.7.2.1"/>
<dbReference type="EMBL" id="AL157959">
    <property type="protein sequence ID" value="CAM09006.1"/>
    <property type="molecule type" value="Genomic_DNA"/>
</dbReference>
<dbReference type="PIR" id="B81816">
    <property type="entry name" value="B81816"/>
</dbReference>
<dbReference type="RefSeq" id="WP_002237256.1">
    <property type="nucleotide sequence ID" value="NC_003116.1"/>
</dbReference>
<dbReference type="SMR" id="Q9JTB8"/>
<dbReference type="EnsemblBacteria" id="CAM09006">
    <property type="protein sequence ID" value="CAM09006"/>
    <property type="gene ID" value="NMA1887"/>
</dbReference>
<dbReference type="KEGG" id="nma:NMA1887"/>
<dbReference type="HOGENOM" id="CLU_031740_1_1_4"/>
<dbReference type="Proteomes" id="UP000000626">
    <property type="component" value="Chromosome"/>
</dbReference>
<dbReference type="GO" id="GO:0009279">
    <property type="term" value="C:cell outer membrane"/>
    <property type="evidence" value="ECO:0007669"/>
    <property type="project" value="UniProtKB-SubCell"/>
</dbReference>
<dbReference type="GO" id="GO:0005507">
    <property type="term" value="F:copper ion binding"/>
    <property type="evidence" value="ECO:0007669"/>
    <property type="project" value="InterPro"/>
</dbReference>
<dbReference type="GO" id="GO:0050421">
    <property type="term" value="F:nitrite reductase (NO-forming) activity"/>
    <property type="evidence" value="ECO:0007669"/>
    <property type="project" value="UniProtKB-EC"/>
</dbReference>
<dbReference type="CDD" id="cd04201">
    <property type="entry name" value="CuRO_1_CuNIR_like"/>
    <property type="match status" value="1"/>
</dbReference>
<dbReference type="CDD" id="cd04208">
    <property type="entry name" value="CuRO_2_CuNIR"/>
    <property type="match status" value="1"/>
</dbReference>
<dbReference type="FunFam" id="2.60.40.420:FF:000091">
    <property type="entry name" value="Copper-containing nitrite reductase"/>
    <property type="match status" value="1"/>
</dbReference>
<dbReference type="Gene3D" id="2.60.40.420">
    <property type="entry name" value="Cupredoxins - blue copper proteins"/>
    <property type="match status" value="1"/>
</dbReference>
<dbReference type="InterPro" id="IPR011707">
    <property type="entry name" value="Cu-oxidase-like_N"/>
</dbReference>
<dbReference type="InterPro" id="IPR045087">
    <property type="entry name" value="Cu-oxidase_fam"/>
</dbReference>
<dbReference type="InterPro" id="IPR008972">
    <property type="entry name" value="Cupredoxin"/>
</dbReference>
<dbReference type="InterPro" id="IPR001287">
    <property type="entry name" value="NO2-reductase_Cu"/>
</dbReference>
<dbReference type="NCBIfam" id="TIGR02376">
    <property type="entry name" value="Cu_nitrite_red"/>
    <property type="match status" value="1"/>
</dbReference>
<dbReference type="PANTHER" id="PTHR11709:SF394">
    <property type="entry name" value="FI03373P-RELATED"/>
    <property type="match status" value="1"/>
</dbReference>
<dbReference type="PANTHER" id="PTHR11709">
    <property type="entry name" value="MULTI-COPPER OXIDASE"/>
    <property type="match status" value="1"/>
</dbReference>
<dbReference type="Pfam" id="PF07732">
    <property type="entry name" value="Cu-oxidase_3"/>
    <property type="match status" value="1"/>
</dbReference>
<dbReference type="PRINTS" id="PR00695">
    <property type="entry name" value="CUNO2RDTASE"/>
</dbReference>
<dbReference type="SUPFAM" id="SSF49503">
    <property type="entry name" value="Cupredoxins"/>
    <property type="match status" value="2"/>
</dbReference>
<dbReference type="PROSITE" id="PS51257">
    <property type="entry name" value="PROKAR_LIPOPROTEIN"/>
    <property type="match status" value="1"/>
</dbReference>
<evidence type="ECO:0000250" key="1"/>
<evidence type="ECO:0000255" key="2">
    <source>
        <dbReference type="PROSITE-ProRule" id="PRU00303"/>
    </source>
</evidence>
<evidence type="ECO:0000256" key="3">
    <source>
        <dbReference type="SAM" id="MobiDB-lite"/>
    </source>
</evidence>
<evidence type="ECO:0000305" key="4"/>
<organism>
    <name type="scientific">Neisseria meningitidis serogroup A / serotype 4A (strain DSM 15465 / Z2491)</name>
    <dbReference type="NCBI Taxonomy" id="122587"/>
    <lineage>
        <taxon>Bacteria</taxon>
        <taxon>Pseudomonadati</taxon>
        <taxon>Pseudomonadota</taxon>
        <taxon>Betaproteobacteria</taxon>
        <taxon>Neisseriales</taxon>
        <taxon>Neisseriaceae</taxon>
        <taxon>Neisseria</taxon>
    </lineage>
</organism>
<reference key="1">
    <citation type="journal article" date="2000" name="Nature">
        <title>Complete DNA sequence of a serogroup A strain of Neisseria meningitidis Z2491.</title>
        <authorList>
            <person name="Parkhill J."/>
            <person name="Achtman M."/>
            <person name="James K.D."/>
            <person name="Bentley S.D."/>
            <person name="Churcher C.M."/>
            <person name="Klee S.R."/>
            <person name="Morelli G."/>
            <person name="Basham D."/>
            <person name="Brown D."/>
            <person name="Chillingworth T."/>
            <person name="Davies R.M."/>
            <person name="Davis P."/>
            <person name="Devlin K."/>
            <person name="Feltwell T."/>
            <person name="Hamlin N."/>
            <person name="Holroyd S."/>
            <person name="Jagels K."/>
            <person name="Leather S."/>
            <person name="Moule S."/>
            <person name="Mungall K.L."/>
            <person name="Quail M.A."/>
            <person name="Rajandream M.A."/>
            <person name="Rutherford K.M."/>
            <person name="Simmonds M."/>
            <person name="Skelton J."/>
            <person name="Whitehead S."/>
            <person name="Spratt B.G."/>
            <person name="Barrell B.G."/>
        </authorList>
    </citation>
    <scope>NUCLEOTIDE SEQUENCE [LARGE SCALE GENOMIC DNA]</scope>
    <source>
        <strain>DSM 15465 / Z2491</strain>
    </source>
</reference>